<proteinExistence type="inferred from homology"/>
<accession>Q6AJF8</accession>
<protein>
    <recommendedName>
        <fullName evidence="1">Beta-ketoacyl-[acyl-carrier-protein] synthase III</fullName>
        <shortName evidence="1">Beta-ketoacyl-ACP synthase III</shortName>
        <shortName evidence="1">KAS III</shortName>
        <ecNumber evidence="1">2.3.1.180</ecNumber>
    </recommendedName>
    <alternativeName>
        <fullName evidence="1">3-oxoacyl-[acyl-carrier-protein] synthase 3</fullName>
    </alternativeName>
    <alternativeName>
        <fullName evidence="1">3-oxoacyl-[acyl-carrier-protein] synthase III</fullName>
    </alternativeName>
</protein>
<dbReference type="EC" id="2.3.1.180" evidence="1"/>
<dbReference type="EMBL" id="CR522870">
    <property type="protein sequence ID" value="CAG37522.1"/>
    <property type="molecule type" value="Genomic_DNA"/>
</dbReference>
<dbReference type="RefSeq" id="WP_011190034.1">
    <property type="nucleotide sequence ID" value="NC_006138.1"/>
</dbReference>
<dbReference type="SMR" id="Q6AJF8"/>
<dbReference type="STRING" id="177439.DP2793"/>
<dbReference type="KEGG" id="dps:DP2793"/>
<dbReference type="eggNOG" id="COG0332">
    <property type="taxonomic scope" value="Bacteria"/>
</dbReference>
<dbReference type="HOGENOM" id="CLU_039592_3_1_7"/>
<dbReference type="OrthoDB" id="9815506at2"/>
<dbReference type="UniPathway" id="UPA00094"/>
<dbReference type="Proteomes" id="UP000000602">
    <property type="component" value="Chromosome"/>
</dbReference>
<dbReference type="GO" id="GO:0005737">
    <property type="term" value="C:cytoplasm"/>
    <property type="evidence" value="ECO:0007669"/>
    <property type="project" value="UniProtKB-SubCell"/>
</dbReference>
<dbReference type="GO" id="GO:0004315">
    <property type="term" value="F:3-oxoacyl-[acyl-carrier-protein] synthase activity"/>
    <property type="evidence" value="ECO:0007669"/>
    <property type="project" value="InterPro"/>
</dbReference>
<dbReference type="GO" id="GO:0033818">
    <property type="term" value="F:beta-ketoacyl-acyl-carrier-protein synthase III activity"/>
    <property type="evidence" value="ECO:0007669"/>
    <property type="project" value="UniProtKB-UniRule"/>
</dbReference>
<dbReference type="GO" id="GO:0006633">
    <property type="term" value="P:fatty acid biosynthetic process"/>
    <property type="evidence" value="ECO:0007669"/>
    <property type="project" value="UniProtKB-UniRule"/>
</dbReference>
<dbReference type="CDD" id="cd00830">
    <property type="entry name" value="KAS_III"/>
    <property type="match status" value="1"/>
</dbReference>
<dbReference type="FunFam" id="3.40.47.10:FF:000004">
    <property type="entry name" value="3-oxoacyl-[acyl-carrier-protein] synthase 3"/>
    <property type="match status" value="1"/>
</dbReference>
<dbReference type="Gene3D" id="3.40.47.10">
    <property type="match status" value="1"/>
</dbReference>
<dbReference type="HAMAP" id="MF_01815">
    <property type="entry name" value="FabH"/>
    <property type="match status" value="1"/>
</dbReference>
<dbReference type="InterPro" id="IPR013747">
    <property type="entry name" value="ACP_syn_III_C"/>
</dbReference>
<dbReference type="InterPro" id="IPR013751">
    <property type="entry name" value="ACP_syn_III_N"/>
</dbReference>
<dbReference type="InterPro" id="IPR004655">
    <property type="entry name" value="FabH"/>
</dbReference>
<dbReference type="InterPro" id="IPR016039">
    <property type="entry name" value="Thiolase-like"/>
</dbReference>
<dbReference type="NCBIfam" id="TIGR00747">
    <property type="entry name" value="fabH"/>
    <property type="match status" value="1"/>
</dbReference>
<dbReference type="NCBIfam" id="NF006829">
    <property type="entry name" value="PRK09352.1"/>
    <property type="match status" value="1"/>
</dbReference>
<dbReference type="PANTHER" id="PTHR43091">
    <property type="entry name" value="3-OXOACYL-[ACYL-CARRIER-PROTEIN] SYNTHASE"/>
    <property type="match status" value="1"/>
</dbReference>
<dbReference type="PANTHER" id="PTHR43091:SF1">
    <property type="entry name" value="BETA-KETOACYL-[ACYL-CARRIER-PROTEIN] SYNTHASE III, CHLOROPLASTIC"/>
    <property type="match status" value="1"/>
</dbReference>
<dbReference type="Pfam" id="PF08545">
    <property type="entry name" value="ACP_syn_III"/>
    <property type="match status" value="1"/>
</dbReference>
<dbReference type="Pfam" id="PF08541">
    <property type="entry name" value="ACP_syn_III_C"/>
    <property type="match status" value="1"/>
</dbReference>
<dbReference type="SUPFAM" id="SSF53901">
    <property type="entry name" value="Thiolase-like"/>
    <property type="match status" value="1"/>
</dbReference>
<evidence type="ECO:0000255" key="1">
    <source>
        <dbReference type="HAMAP-Rule" id="MF_01815"/>
    </source>
</evidence>
<comment type="function">
    <text evidence="1">Catalyzes the condensation reaction of fatty acid synthesis by the addition to an acyl acceptor of two carbons from malonyl-ACP. Catalyzes the first condensation reaction which initiates fatty acid synthesis and may therefore play a role in governing the total rate of fatty acid production. Possesses both acetoacetyl-ACP synthase and acetyl transacylase activities. Its substrate specificity determines the biosynthesis of branched-chain and/or straight-chain of fatty acids.</text>
</comment>
<comment type="catalytic activity">
    <reaction evidence="1">
        <text>malonyl-[ACP] + acetyl-CoA + H(+) = 3-oxobutanoyl-[ACP] + CO2 + CoA</text>
        <dbReference type="Rhea" id="RHEA:12080"/>
        <dbReference type="Rhea" id="RHEA-COMP:9623"/>
        <dbReference type="Rhea" id="RHEA-COMP:9625"/>
        <dbReference type="ChEBI" id="CHEBI:15378"/>
        <dbReference type="ChEBI" id="CHEBI:16526"/>
        <dbReference type="ChEBI" id="CHEBI:57287"/>
        <dbReference type="ChEBI" id="CHEBI:57288"/>
        <dbReference type="ChEBI" id="CHEBI:78449"/>
        <dbReference type="ChEBI" id="CHEBI:78450"/>
        <dbReference type="EC" id="2.3.1.180"/>
    </reaction>
</comment>
<comment type="pathway">
    <text evidence="1">Lipid metabolism; fatty acid biosynthesis.</text>
</comment>
<comment type="subunit">
    <text evidence="1">Homodimer.</text>
</comment>
<comment type="subcellular location">
    <subcellularLocation>
        <location evidence="1">Cytoplasm</location>
    </subcellularLocation>
</comment>
<comment type="domain">
    <text evidence="1">The last Arg residue of the ACP-binding site is essential for the weak association between ACP/AcpP and FabH.</text>
</comment>
<comment type="similarity">
    <text evidence="1">Belongs to the thiolase-like superfamily. FabH family.</text>
</comment>
<sequence>MSVVILGTGSCLPEKIVTNKDLEKIVETNDEWIRTRTGICERRIAGPGEQAYILASRAAKNALDAAGLVAEDLDMIVVGTISAHMVMPSCACMIQQEIGAKKAFAFDVNAACSGFLYAMEVGSKYVATNPAMKVLCIGTETLSARTNQQDRNTSIIFADGAGAAVIGYEEGDRGILASKLFSDGSFGDILFLSGSESTNTDLRLGEYEGSHIHMEGREVFKHAVRAMEGAVNTIMEEVGVSPHEIKLLIPHQANIRIIKNLGERLGLSSEQVFVNIANYGNTSAASVPIALDEAVRGGKIESGDLVLLCSFGGGFTWGASLIRW</sequence>
<keyword id="KW-0012">Acyltransferase</keyword>
<keyword id="KW-0963">Cytoplasm</keyword>
<keyword id="KW-0275">Fatty acid biosynthesis</keyword>
<keyword id="KW-0276">Fatty acid metabolism</keyword>
<keyword id="KW-0444">Lipid biosynthesis</keyword>
<keyword id="KW-0443">Lipid metabolism</keyword>
<keyword id="KW-0511">Multifunctional enzyme</keyword>
<keyword id="KW-1185">Reference proteome</keyword>
<keyword id="KW-0808">Transferase</keyword>
<name>FABH_DESPS</name>
<feature type="chain" id="PRO_1000056351" description="Beta-ketoacyl-[acyl-carrier-protein] synthase III">
    <location>
        <begin position="1"/>
        <end position="324"/>
    </location>
</feature>
<feature type="region of interest" description="ACP-binding" evidence="1">
    <location>
        <begin position="252"/>
        <end position="256"/>
    </location>
</feature>
<feature type="active site" evidence="1">
    <location>
        <position position="112"/>
    </location>
</feature>
<feature type="active site" evidence="1">
    <location>
        <position position="251"/>
    </location>
</feature>
<feature type="active site" evidence="1">
    <location>
        <position position="281"/>
    </location>
</feature>
<organism>
    <name type="scientific">Desulfotalea psychrophila (strain LSv54 / DSM 12343)</name>
    <dbReference type="NCBI Taxonomy" id="177439"/>
    <lineage>
        <taxon>Bacteria</taxon>
        <taxon>Pseudomonadati</taxon>
        <taxon>Thermodesulfobacteriota</taxon>
        <taxon>Desulfobulbia</taxon>
        <taxon>Desulfobulbales</taxon>
        <taxon>Desulfocapsaceae</taxon>
        <taxon>Desulfotalea</taxon>
    </lineage>
</organism>
<gene>
    <name evidence="1" type="primary">fabH</name>
    <name type="ordered locus">DP2793</name>
</gene>
<reference key="1">
    <citation type="journal article" date="2004" name="Environ. Microbiol.">
        <title>The genome of Desulfotalea psychrophila, a sulfate-reducing bacterium from permanently cold Arctic sediments.</title>
        <authorList>
            <person name="Rabus R."/>
            <person name="Ruepp A."/>
            <person name="Frickey T."/>
            <person name="Rattei T."/>
            <person name="Fartmann B."/>
            <person name="Stark M."/>
            <person name="Bauer M."/>
            <person name="Zibat A."/>
            <person name="Lombardot T."/>
            <person name="Becker I."/>
            <person name="Amann J."/>
            <person name="Gellner K."/>
            <person name="Teeling H."/>
            <person name="Leuschner W.D."/>
            <person name="Gloeckner F.-O."/>
            <person name="Lupas A.N."/>
            <person name="Amann R."/>
            <person name="Klenk H.-P."/>
        </authorList>
    </citation>
    <scope>NUCLEOTIDE SEQUENCE [LARGE SCALE GENOMIC DNA]</scope>
    <source>
        <strain>DSM 12343 / LSv54</strain>
    </source>
</reference>